<name>FMT_SHESR</name>
<dbReference type="EC" id="2.1.2.9" evidence="1"/>
<dbReference type="EMBL" id="CP000444">
    <property type="protein sequence ID" value="ABI41032.1"/>
    <property type="molecule type" value="Genomic_DNA"/>
</dbReference>
<dbReference type="SMR" id="Q0I0S3"/>
<dbReference type="KEGG" id="shm:Shewmr7_0026"/>
<dbReference type="HOGENOM" id="CLU_033347_1_2_6"/>
<dbReference type="GO" id="GO:0005829">
    <property type="term" value="C:cytosol"/>
    <property type="evidence" value="ECO:0007669"/>
    <property type="project" value="TreeGrafter"/>
</dbReference>
<dbReference type="GO" id="GO:0004479">
    <property type="term" value="F:methionyl-tRNA formyltransferase activity"/>
    <property type="evidence" value="ECO:0007669"/>
    <property type="project" value="UniProtKB-UniRule"/>
</dbReference>
<dbReference type="CDD" id="cd08646">
    <property type="entry name" value="FMT_core_Met-tRNA-FMT_N"/>
    <property type="match status" value="1"/>
</dbReference>
<dbReference type="CDD" id="cd08704">
    <property type="entry name" value="Met_tRNA_FMT_C"/>
    <property type="match status" value="1"/>
</dbReference>
<dbReference type="FunFam" id="3.10.25.10:FF:000001">
    <property type="entry name" value="Methionyl-tRNA formyltransferase"/>
    <property type="match status" value="1"/>
</dbReference>
<dbReference type="FunFam" id="3.40.50.12230:FF:000001">
    <property type="entry name" value="Methionyl-tRNA formyltransferase"/>
    <property type="match status" value="1"/>
</dbReference>
<dbReference type="FunFam" id="3.40.50.170:FF:000003">
    <property type="entry name" value="Methionyl-tRNA formyltransferase"/>
    <property type="match status" value="1"/>
</dbReference>
<dbReference type="Gene3D" id="3.10.25.10">
    <property type="entry name" value="Formyl transferase, C-terminal domain"/>
    <property type="match status" value="1"/>
</dbReference>
<dbReference type="Gene3D" id="3.40.50.170">
    <property type="entry name" value="Formyl transferase, N-terminal domain"/>
    <property type="match status" value="1"/>
</dbReference>
<dbReference type="HAMAP" id="MF_00182">
    <property type="entry name" value="Formyl_trans"/>
    <property type="match status" value="1"/>
</dbReference>
<dbReference type="InterPro" id="IPR005794">
    <property type="entry name" value="Fmt"/>
</dbReference>
<dbReference type="InterPro" id="IPR005793">
    <property type="entry name" value="Formyl_trans_C"/>
</dbReference>
<dbReference type="InterPro" id="IPR037022">
    <property type="entry name" value="Formyl_trans_C_sf"/>
</dbReference>
<dbReference type="InterPro" id="IPR002376">
    <property type="entry name" value="Formyl_transf_N"/>
</dbReference>
<dbReference type="InterPro" id="IPR036477">
    <property type="entry name" value="Formyl_transf_N_sf"/>
</dbReference>
<dbReference type="InterPro" id="IPR011034">
    <property type="entry name" value="Formyl_transferase-like_C_sf"/>
</dbReference>
<dbReference type="InterPro" id="IPR001555">
    <property type="entry name" value="GART_AS"/>
</dbReference>
<dbReference type="InterPro" id="IPR044135">
    <property type="entry name" value="Met-tRNA-FMT_C"/>
</dbReference>
<dbReference type="InterPro" id="IPR041711">
    <property type="entry name" value="Met-tRNA-FMT_N"/>
</dbReference>
<dbReference type="NCBIfam" id="TIGR00460">
    <property type="entry name" value="fmt"/>
    <property type="match status" value="1"/>
</dbReference>
<dbReference type="PANTHER" id="PTHR11138">
    <property type="entry name" value="METHIONYL-TRNA FORMYLTRANSFERASE"/>
    <property type="match status" value="1"/>
</dbReference>
<dbReference type="PANTHER" id="PTHR11138:SF5">
    <property type="entry name" value="METHIONYL-TRNA FORMYLTRANSFERASE, MITOCHONDRIAL"/>
    <property type="match status" value="1"/>
</dbReference>
<dbReference type="Pfam" id="PF02911">
    <property type="entry name" value="Formyl_trans_C"/>
    <property type="match status" value="1"/>
</dbReference>
<dbReference type="Pfam" id="PF00551">
    <property type="entry name" value="Formyl_trans_N"/>
    <property type="match status" value="1"/>
</dbReference>
<dbReference type="SUPFAM" id="SSF50486">
    <property type="entry name" value="FMT C-terminal domain-like"/>
    <property type="match status" value="1"/>
</dbReference>
<dbReference type="SUPFAM" id="SSF53328">
    <property type="entry name" value="Formyltransferase"/>
    <property type="match status" value="1"/>
</dbReference>
<dbReference type="PROSITE" id="PS00373">
    <property type="entry name" value="GART"/>
    <property type="match status" value="1"/>
</dbReference>
<keyword id="KW-0648">Protein biosynthesis</keyword>
<keyword id="KW-0808">Transferase</keyword>
<comment type="function">
    <text evidence="1">Attaches a formyl group to the free amino group of methionyl-tRNA(fMet). The formyl group appears to play a dual role in the initiator identity of N-formylmethionyl-tRNA by promoting its recognition by IF2 and preventing the misappropriation of this tRNA by the elongation apparatus.</text>
</comment>
<comment type="catalytic activity">
    <reaction evidence="1">
        <text>L-methionyl-tRNA(fMet) + (6R)-10-formyltetrahydrofolate = N-formyl-L-methionyl-tRNA(fMet) + (6S)-5,6,7,8-tetrahydrofolate + H(+)</text>
        <dbReference type="Rhea" id="RHEA:24380"/>
        <dbReference type="Rhea" id="RHEA-COMP:9952"/>
        <dbReference type="Rhea" id="RHEA-COMP:9953"/>
        <dbReference type="ChEBI" id="CHEBI:15378"/>
        <dbReference type="ChEBI" id="CHEBI:57453"/>
        <dbReference type="ChEBI" id="CHEBI:78530"/>
        <dbReference type="ChEBI" id="CHEBI:78844"/>
        <dbReference type="ChEBI" id="CHEBI:195366"/>
        <dbReference type="EC" id="2.1.2.9"/>
    </reaction>
</comment>
<comment type="similarity">
    <text evidence="1">Belongs to the Fmt family.</text>
</comment>
<proteinExistence type="inferred from homology"/>
<feature type="chain" id="PRO_1000020160" description="Methionyl-tRNA formyltransferase">
    <location>
        <begin position="1"/>
        <end position="318"/>
    </location>
</feature>
<feature type="binding site" evidence="1">
    <location>
        <begin position="112"/>
        <end position="115"/>
    </location>
    <ligand>
        <name>(6S)-5,6,7,8-tetrahydrofolate</name>
        <dbReference type="ChEBI" id="CHEBI:57453"/>
    </ligand>
</feature>
<sequence>MKPLNIIFAGTPDFAARHLQALINSHHNVIAVYTQPDRPAGRGKKLTASPVKELAVSHDIPVYQPGSLRKEPAQQELAALNADIMVVVAYGLILPKVVLDTPRLGCINVHGSILPRWRGAAPIQRALWAGDKETGVTIMQMDVGLDTGDMLLKTYLPIEDDDTSATLYEKLAQQGPDALLQALEGLANGTLTAEKQDEALANYAEKLSKEEARLDWSKSATQLWQEVRAFNPWPVSYFEHQGNTIKVWQTQISTTSSNAAPGTIISASKKGIEVATGDGVLTLLSMQLPGKKPLSVADILNARGDWFTPNTRLNNEAQ</sequence>
<organism>
    <name type="scientific">Shewanella sp. (strain MR-7)</name>
    <dbReference type="NCBI Taxonomy" id="60481"/>
    <lineage>
        <taxon>Bacteria</taxon>
        <taxon>Pseudomonadati</taxon>
        <taxon>Pseudomonadota</taxon>
        <taxon>Gammaproteobacteria</taxon>
        <taxon>Alteromonadales</taxon>
        <taxon>Shewanellaceae</taxon>
        <taxon>Shewanella</taxon>
    </lineage>
</organism>
<protein>
    <recommendedName>
        <fullName evidence="1">Methionyl-tRNA formyltransferase</fullName>
        <ecNumber evidence="1">2.1.2.9</ecNumber>
    </recommendedName>
</protein>
<gene>
    <name evidence="1" type="primary">fmt</name>
    <name type="ordered locus">Shewmr7_0026</name>
</gene>
<reference key="1">
    <citation type="submission" date="2006-08" db="EMBL/GenBank/DDBJ databases">
        <title>Complete sequence of chromosome 1 of Shewanella sp. MR-7.</title>
        <authorList>
            <person name="Copeland A."/>
            <person name="Lucas S."/>
            <person name="Lapidus A."/>
            <person name="Barry K."/>
            <person name="Detter J.C."/>
            <person name="Glavina del Rio T."/>
            <person name="Hammon N."/>
            <person name="Israni S."/>
            <person name="Dalin E."/>
            <person name="Tice H."/>
            <person name="Pitluck S."/>
            <person name="Kiss H."/>
            <person name="Brettin T."/>
            <person name="Bruce D."/>
            <person name="Han C."/>
            <person name="Tapia R."/>
            <person name="Gilna P."/>
            <person name="Schmutz J."/>
            <person name="Larimer F."/>
            <person name="Land M."/>
            <person name="Hauser L."/>
            <person name="Kyrpides N."/>
            <person name="Mikhailova N."/>
            <person name="Nealson K."/>
            <person name="Konstantinidis K."/>
            <person name="Klappenbach J."/>
            <person name="Tiedje J."/>
            <person name="Richardson P."/>
        </authorList>
    </citation>
    <scope>NUCLEOTIDE SEQUENCE [LARGE SCALE GENOMIC DNA]</scope>
    <source>
        <strain>MR-7</strain>
    </source>
</reference>
<evidence type="ECO:0000255" key="1">
    <source>
        <dbReference type="HAMAP-Rule" id="MF_00182"/>
    </source>
</evidence>
<accession>Q0I0S3</accession>